<sequence length="44" mass="5029">MTTRKSAEAITYPIFTVRWLSIHALAVPTIFFLGSITAMQFIQR</sequence>
<proteinExistence type="inferred from homology"/>
<feature type="chain" id="PRO_0000275739" description="Cytochrome b559 subunit beta">
    <location>
        <begin position="1"/>
        <end position="44"/>
    </location>
</feature>
<feature type="transmembrane region" description="Helical" evidence="1">
    <location>
        <begin position="19"/>
        <end position="35"/>
    </location>
</feature>
<feature type="binding site" description="axial binding residue" evidence="1">
    <location>
        <position position="23"/>
    </location>
    <ligand>
        <name>heme</name>
        <dbReference type="ChEBI" id="CHEBI:30413"/>
        <note>ligand shared with alpha subunit</note>
    </ligand>
    <ligandPart>
        <name>Fe</name>
        <dbReference type="ChEBI" id="CHEBI:18248"/>
    </ligandPart>
</feature>
<organism>
    <name type="scientific">Tetradesmus obliquus</name>
    <name type="common">Green alga</name>
    <name type="synonym">Acutodesmus obliquus</name>
    <dbReference type="NCBI Taxonomy" id="3088"/>
    <lineage>
        <taxon>Eukaryota</taxon>
        <taxon>Viridiplantae</taxon>
        <taxon>Chlorophyta</taxon>
        <taxon>core chlorophytes</taxon>
        <taxon>Chlorophyceae</taxon>
        <taxon>CS clade</taxon>
        <taxon>Sphaeropleales</taxon>
        <taxon>Scenedesmaceae</taxon>
        <taxon>Tetradesmus</taxon>
    </lineage>
</organism>
<keyword id="KW-0150">Chloroplast</keyword>
<keyword id="KW-0249">Electron transport</keyword>
<keyword id="KW-0349">Heme</keyword>
<keyword id="KW-0408">Iron</keyword>
<keyword id="KW-0472">Membrane</keyword>
<keyword id="KW-0479">Metal-binding</keyword>
<keyword id="KW-0602">Photosynthesis</keyword>
<keyword id="KW-0604">Photosystem II</keyword>
<keyword id="KW-0934">Plastid</keyword>
<keyword id="KW-0793">Thylakoid</keyword>
<keyword id="KW-0812">Transmembrane</keyword>
<keyword id="KW-1133">Transmembrane helix</keyword>
<keyword id="KW-0813">Transport</keyword>
<protein>
    <recommendedName>
        <fullName evidence="1">Cytochrome b559 subunit beta</fullName>
    </recommendedName>
    <alternativeName>
        <fullName evidence="1">PSII reaction center subunit VI</fullName>
    </alternativeName>
</protein>
<geneLocation type="chloroplast"/>
<name>PSBF_TETOB</name>
<comment type="function">
    <text evidence="1">This b-type cytochrome is tightly associated with the reaction center of photosystem II (PSII). PSII is a light-driven water:plastoquinone oxidoreductase that uses light energy to abstract electrons from H(2)O, generating O(2) and a proton gradient subsequently used for ATP formation. It consists of a core antenna complex that captures photons, and an electron transfer chain that converts photonic excitation into a charge separation.</text>
</comment>
<comment type="cofactor">
    <cofactor evidence="1">
        <name>heme b</name>
        <dbReference type="ChEBI" id="CHEBI:60344"/>
    </cofactor>
    <text evidence="1">With its partner (PsbE) binds heme. PSII binds additional chlorophylls, carotenoids and specific lipids.</text>
</comment>
<comment type="subunit">
    <text evidence="1">Heterodimer of an alpha subunit and a beta subunit. PSII is composed of 1 copy each of membrane proteins PsbA, PsbB, PsbC, PsbD, PsbE, PsbF, PsbH, PsbI, PsbJ, PsbK, PsbL, PsbM, PsbT, PsbX, PsbY, PsbZ, Psb30/Ycf12, at least 3 peripheral proteins of the oxygen-evolving complex and a large number of cofactors. It forms dimeric complexes.</text>
</comment>
<comment type="subcellular location">
    <subcellularLocation>
        <location evidence="1">Plastid</location>
        <location evidence="1">Chloroplast thylakoid membrane</location>
        <topology evidence="1">Single-pass membrane protein</topology>
    </subcellularLocation>
</comment>
<comment type="similarity">
    <text evidence="1">Belongs to the PsbE/PsbF family.</text>
</comment>
<gene>
    <name evidence="1" type="primary">psbF</name>
</gene>
<dbReference type="EMBL" id="DQ396875">
    <property type="protein sequence ID" value="ABD48233.1"/>
    <property type="molecule type" value="Genomic_DNA"/>
</dbReference>
<dbReference type="RefSeq" id="YP_635951.1">
    <property type="nucleotide sequence ID" value="NC_008101.1"/>
</dbReference>
<dbReference type="SMR" id="Q1KVX3"/>
<dbReference type="GeneID" id="4099818"/>
<dbReference type="GO" id="GO:0009535">
    <property type="term" value="C:chloroplast thylakoid membrane"/>
    <property type="evidence" value="ECO:0007669"/>
    <property type="project" value="UniProtKB-SubCell"/>
</dbReference>
<dbReference type="GO" id="GO:0009539">
    <property type="term" value="C:photosystem II reaction center"/>
    <property type="evidence" value="ECO:0007669"/>
    <property type="project" value="InterPro"/>
</dbReference>
<dbReference type="GO" id="GO:0009055">
    <property type="term" value="F:electron transfer activity"/>
    <property type="evidence" value="ECO:0007669"/>
    <property type="project" value="UniProtKB-UniRule"/>
</dbReference>
<dbReference type="GO" id="GO:0020037">
    <property type="term" value="F:heme binding"/>
    <property type="evidence" value="ECO:0007669"/>
    <property type="project" value="InterPro"/>
</dbReference>
<dbReference type="GO" id="GO:0005506">
    <property type="term" value="F:iron ion binding"/>
    <property type="evidence" value="ECO:0007669"/>
    <property type="project" value="UniProtKB-UniRule"/>
</dbReference>
<dbReference type="GO" id="GO:0009767">
    <property type="term" value="P:photosynthetic electron transport chain"/>
    <property type="evidence" value="ECO:0007669"/>
    <property type="project" value="InterPro"/>
</dbReference>
<dbReference type="HAMAP" id="MF_00643">
    <property type="entry name" value="PSII_PsbF"/>
    <property type="match status" value="1"/>
</dbReference>
<dbReference type="InterPro" id="IPR006241">
    <property type="entry name" value="PSII_cyt_b559_bsu"/>
</dbReference>
<dbReference type="InterPro" id="IPR006216">
    <property type="entry name" value="PSII_cyt_b559_CS"/>
</dbReference>
<dbReference type="InterPro" id="IPR013081">
    <property type="entry name" value="PSII_cyt_b559_N"/>
</dbReference>
<dbReference type="NCBIfam" id="TIGR01333">
    <property type="entry name" value="cyt_b559_beta"/>
    <property type="match status" value="1"/>
</dbReference>
<dbReference type="Pfam" id="PF00283">
    <property type="entry name" value="Cytochrom_B559"/>
    <property type="match status" value="1"/>
</dbReference>
<dbReference type="PIRSF" id="PIRSF000037">
    <property type="entry name" value="PsbF"/>
    <property type="match status" value="1"/>
</dbReference>
<dbReference type="SUPFAM" id="SSF161045">
    <property type="entry name" value="Cytochrome b559 subunits"/>
    <property type="match status" value="1"/>
</dbReference>
<dbReference type="PROSITE" id="PS00537">
    <property type="entry name" value="CYTOCHROME_B559"/>
    <property type="match status" value="1"/>
</dbReference>
<accession>Q1KVX3</accession>
<evidence type="ECO:0000255" key="1">
    <source>
        <dbReference type="HAMAP-Rule" id="MF_00643"/>
    </source>
</evidence>
<reference key="1">
    <citation type="journal article" date="2006" name="BMC Evol. Biol.">
        <title>The complete chloroplast genome sequence of the chlorophycean green alga Scenedesmus obliquus reveals a compact gene organization and a biased distribution of genes on the two DNA strands.</title>
        <authorList>
            <person name="de Cambiaire J.-C."/>
            <person name="Otis C."/>
            <person name="Lemieux C."/>
            <person name="Turmel M."/>
        </authorList>
    </citation>
    <scope>NUCLEOTIDE SEQUENCE [LARGE SCALE GENOMIC DNA]</scope>
    <source>
        <strain>UTEX 393</strain>
    </source>
</reference>